<dbReference type="EC" id="1.3.8.13" evidence="1"/>
<dbReference type="EMBL" id="AP009240">
    <property type="protein sequence ID" value="BAG75564.1"/>
    <property type="molecule type" value="Genomic_DNA"/>
</dbReference>
<dbReference type="RefSeq" id="WP_000347117.1">
    <property type="nucleotide sequence ID" value="NC_011415.1"/>
</dbReference>
<dbReference type="SMR" id="B6HYZ0"/>
<dbReference type="GeneID" id="93777396"/>
<dbReference type="KEGG" id="ecy:ECSE_0040"/>
<dbReference type="HOGENOM" id="CLU_018204_0_2_6"/>
<dbReference type="UniPathway" id="UPA00117"/>
<dbReference type="Proteomes" id="UP000008199">
    <property type="component" value="Chromosome"/>
</dbReference>
<dbReference type="GO" id="GO:0005737">
    <property type="term" value="C:cytoplasm"/>
    <property type="evidence" value="ECO:0007669"/>
    <property type="project" value="UniProtKB-SubCell"/>
</dbReference>
<dbReference type="GO" id="GO:0003995">
    <property type="term" value="F:acyl-CoA dehydrogenase activity"/>
    <property type="evidence" value="ECO:0007669"/>
    <property type="project" value="InterPro"/>
</dbReference>
<dbReference type="GO" id="GO:0050660">
    <property type="term" value="F:flavin adenine dinucleotide binding"/>
    <property type="evidence" value="ECO:0007669"/>
    <property type="project" value="InterPro"/>
</dbReference>
<dbReference type="GO" id="GO:0009437">
    <property type="term" value="P:carnitine metabolic process"/>
    <property type="evidence" value="ECO:0007669"/>
    <property type="project" value="UniProtKB-UniRule"/>
</dbReference>
<dbReference type="CDD" id="cd00567">
    <property type="entry name" value="ACAD"/>
    <property type="match status" value="1"/>
</dbReference>
<dbReference type="FunFam" id="1.20.140.10:FF:000001">
    <property type="entry name" value="Acyl-CoA dehydrogenase"/>
    <property type="match status" value="1"/>
</dbReference>
<dbReference type="FunFam" id="2.40.110.10:FF:000002">
    <property type="entry name" value="Acyl-CoA dehydrogenase fadE12"/>
    <property type="match status" value="1"/>
</dbReference>
<dbReference type="FunFam" id="1.10.540.10:FF:000005">
    <property type="entry name" value="Crotonobetainyl-CoA reductase"/>
    <property type="match status" value="1"/>
</dbReference>
<dbReference type="Gene3D" id="1.10.540.10">
    <property type="entry name" value="Acyl-CoA dehydrogenase/oxidase, N-terminal domain"/>
    <property type="match status" value="1"/>
</dbReference>
<dbReference type="Gene3D" id="2.40.110.10">
    <property type="entry name" value="Butyryl-CoA Dehydrogenase, subunit A, domain 2"/>
    <property type="match status" value="1"/>
</dbReference>
<dbReference type="Gene3D" id="1.20.140.10">
    <property type="entry name" value="Butyryl-CoA Dehydrogenase, subunit A, domain 3"/>
    <property type="match status" value="1"/>
</dbReference>
<dbReference type="HAMAP" id="MF_01052">
    <property type="entry name" value="CaiA"/>
    <property type="match status" value="1"/>
</dbReference>
<dbReference type="InterPro" id="IPR006089">
    <property type="entry name" value="Acyl-CoA_DH_CS"/>
</dbReference>
<dbReference type="InterPro" id="IPR006091">
    <property type="entry name" value="Acyl-CoA_Oxase/DH_mid-dom"/>
</dbReference>
<dbReference type="InterPro" id="IPR046373">
    <property type="entry name" value="Acyl-CoA_Oxase/DH_mid-dom_sf"/>
</dbReference>
<dbReference type="InterPro" id="IPR036250">
    <property type="entry name" value="AcylCo_DH-like_C"/>
</dbReference>
<dbReference type="InterPro" id="IPR009075">
    <property type="entry name" value="AcylCo_DH/oxidase_C"/>
</dbReference>
<dbReference type="InterPro" id="IPR013786">
    <property type="entry name" value="AcylCoA_DH/ox_N"/>
</dbReference>
<dbReference type="InterPro" id="IPR037069">
    <property type="entry name" value="AcylCoA_DH/ox_N_sf"/>
</dbReference>
<dbReference type="InterPro" id="IPR009100">
    <property type="entry name" value="AcylCoA_DH/oxidase_NM_dom_sf"/>
</dbReference>
<dbReference type="InterPro" id="IPR023450">
    <property type="entry name" value="CaiA"/>
</dbReference>
<dbReference type="NCBIfam" id="NF002885">
    <property type="entry name" value="PRK03354.1"/>
    <property type="match status" value="1"/>
</dbReference>
<dbReference type="PANTHER" id="PTHR43884">
    <property type="entry name" value="ACYL-COA DEHYDROGENASE"/>
    <property type="match status" value="1"/>
</dbReference>
<dbReference type="PANTHER" id="PTHR43884:SF12">
    <property type="entry name" value="ISOVALERYL-COA DEHYDROGENASE, MITOCHONDRIAL-RELATED"/>
    <property type="match status" value="1"/>
</dbReference>
<dbReference type="Pfam" id="PF00441">
    <property type="entry name" value="Acyl-CoA_dh_1"/>
    <property type="match status" value="1"/>
</dbReference>
<dbReference type="Pfam" id="PF02770">
    <property type="entry name" value="Acyl-CoA_dh_M"/>
    <property type="match status" value="1"/>
</dbReference>
<dbReference type="Pfam" id="PF02771">
    <property type="entry name" value="Acyl-CoA_dh_N"/>
    <property type="match status" value="1"/>
</dbReference>
<dbReference type="PIRSF" id="PIRSF016578">
    <property type="entry name" value="HsaA"/>
    <property type="match status" value="1"/>
</dbReference>
<dbReference type="SUPFAM" id="SSF47203">
    <property type="entry name" value="Acyl-CoA dehydrogenase C-terminal domain-like"/>
    <property type="match status" value="1"/>
</dbReference>
<dbReference type="SUPFAM" id="SSF56645">
    <property type="entry name" value="Acyl-CoA dehydrogenase NM domain-like"/>
    <property type="match status" value="1"/>
</dbReference>
<dbReference type="PROSITE" id="PS00072">
    <property type="entry name" value="ACYL_COA_DH_1"/>
    <property type="match status" value="1"/>
</dbReference>
<dbReference type="PROSITE" id="PS00073">
    <property type="entry name" value="ACYL_COA_DH_2"/>
    <property type="match status" value="1"/>
</dbReference>
<keyword id="KW-0963">Cytoplasm</keyword>
<keyword id="KW-0274">FAD</keyword>
<keyword id="KW-0285">Flavoprotein</keyword>
<keyword id="KW-0560">Oxidoreductase</keyword>
<evidence type="ECO:0000255" key="1">
    <source>
        <dbReference type="HAMAP-Rule" id="MF_01052"/>
    </source>
</evidence>
<gene>
    <name evidence="1" type="primary">caiA</name>
    <name type="ordered locus">ECSE_0040</name>
</gene>
<reference key="1">
    <citation type="journal article" date="2008" name="DNA Res.">
        <title>Complete genome sequence and comparative analysis of the wild-type commensal Escherichia coli strain SE11 isolated from a healthy adult.</title>
        <authorList>
            <person name="Oshima K."/>
            <person name="Toh H."/>
            <person name="Ogura Y."/>
            <person name="Sasamoto H."/>
            <person name="Morita H."/>
            <person name="Park S.-H."/>
            <person name="Ooka T."/>
            <person name="Iyoda S."/>
            <person name="Taylor T.D."/>
            <person name="Hayashi T."/>
            <person name="Itoh K."/>
            <person name="Hattori M."/>
        </authorList>
    </citation>
    <scope>NUCLEOTIDE SEQUENCE [LARGE SCALE GENOMIC DNA]</scope>
    <source>
        <strain>SE11</strain>
    </source>
</reference>
<proteinExistence type="inferred from homology"/>
<organism>
    <name type="scientific">Escherichia coli (strain SE11)</name>
    <dbReference type="NCBI Taxonomy" id="409438"/>
    <lineage>
        <taxon>Bacteria</taxon>
        <taxon>Pseudomonadati</taxon>
        <taxon>Pseudomonadota</taxon>
        <taxon>Gammaproteobacteria</taxon>
        <taxon>Enterobacterales</taxon>
        <taxon>Enterobacteriaceae</taxon>
        <taxon>Escherichia</taxon>
    </lineage>
</organism>
<comment type="function">
    <text evidence="1">Catalyzes the reduction of crotonobetainyl-CoA to gamma-butyrobetainyl-CoA.</text>
</comment>
<comment type="catalytic activity">
    <reaction evidence="1">
        <text>4-(trimethylamino)butanoyl-CoA + oxidized [electron-transfer flavoprotein] + H(+) = crotonobetainyl-CoA + reduced [electron-transfer flavoprotein]</text>
        <dbReference type="Rhea" id="RHEA:51584"/>
        <dbReference type="Rhea" id="RHEA-COMP:10685"/>
        <dbReference type="Rhea" id="RHEA-COMP:10686"/>
        <dbReference type="ChEBI" id="CHEBI:15378"/>
        <dbReference type="ChEBI" id="CHEBI:57692"/>
        <dbReference type="ChEBI" id="CHEBI:58307"/>
        <dbReference type="ChEBI" id="CHEBI:60933"/>
        <dbReference type="ChEBI" id="CHEBI:61513"/>
        <dbReference type="EC" id="1.3.8.13"/>
    </reaction>
</comment>
<comment type="cofactor">
    <cofactor evidence="1">
        <name>FAD</name>
        <dbReference type="ChEBI" id="CHEBI:57692"/>
    </cofactor>
</comment>
<comment type="pathway">
    <text evidence="1">Amine and polyamine metabolism; carnitine metabolism.</text>
</comment>
<comment type="subunit">
    <text evidence="1">Homotetramer.</text>
</comment>
<comment type="subcellular location">
    <subcellularLocation>
        <location evidence="1">Cytoplasm</location>
    </subcellularLocation>
</comment>
<comment type="similarity">
    <text evidence="1">Belongs to the acyl-CoA dehydrogenase family.</text>
</comment>
<name>CAIA_ECOSE</name>
<feature type="chain" id="PRO_1000136274" description="Crotonobetainyl-CoA reductase">
    <location>
        <begin position="1"/>
        <end position="380"/>
    </location>
</feature>
<sequence length="380" mass="42558">MDFNLNDEQELFVAGIRELMASENWEAYFAECDRDSVYPERFVKALADMGIDSLLIPEEHGGLDAGFVTLAAVWMELGRLGAPTYVLYQLPGGFNTFLREGTQEQIDKIMAFRGTGKQMWNSAITEPGAGSDVGSLKTTYTRRNGKIYLNGSKCFITSSAYTPYIVVMARDGASPDKPVYTEWFVDMSKPGIKVTKLEKLGLRMDSCCEITFDDVELDEKDMFGREGNGFNRVKEEFDHERFLVALTNYGTAMCAFEDAARYANQRVQFGEAIGRFQLIQEKFAHMAIKLNSMKNMLYEAAWKADNGTITSGDAAMCKYFCANAAFEVVDSAMQVLGGVGIAGNHRISRFWRDLRVDRVSGGSDEMQILTLGRAVLKQYR</sequence>
<protein>
    <recommendedName>
        <fullName evidence="1">Crotonobetainyl-CoA reductase</fullName>
        <ecNumber evidence="1">1.3.8.13</ecNumber>
    </recommendedName>
    <alternativeName>
        <fullName evidence="1">Crotonobetainyl-CoA dehydrogenase</fullName>
    </alternativeName>
</protein>
<accession>B6HYZ0</accession>